<organism>
    <name type="scientific">Dictyostelium discoideum</name>
    <name type="common">Social amoeba</name>
    <dbReference type="NCBI Taxonomy" id="44689"/>
    <lineage>
        <taxon>Eukaryota</taxon>
        <taxon>Amoebozoa</taxon>
        <taxon>Evosea</taxon>
        <taxon>Eumycetozoa</taxon>
        <taxon>Dictyostelia</taxon>
        <taxon>Dictyosteliales</taxon>
        <taxon>Dictyosteliaceae</taxon>
        <taxon>Dictyostelium</taxon>
    </lineage>
</organism>
<feature type="chain" id="PRO_0000352468" description="Putative uncharacterized protein DDB_G0280241">
    <location>
        <begin position="1"/>
        <end position="210"/>
    </location>
</feature>
<name>Y6463_DICDI</name>
<sequence length="210" mass="24426">MKNNQTNQIKKRKLPYQIDKFKVQKFHHFQPNPITNSIEPLLDGSNNNKNNNYKKLKKMNYISTTTITTTNNIDLNNLLPIENIKQLFNQLNSNREIMDTLFNQFLQLYNSINFQSPLSNLSLLPITNYSNNDNDYNSNNIISTNIEGNNNNKSFILPNLNEDLFLNIPDSLKDLTNEKSIQENITLPTLENDLHSPLNLIQQFDQIINK</sequence>
<keyword id="KW-1185">Reference proteome</keyword>
<dbReference type="EMBL" id="AAFI02000035">
    <property type="protein sequence ID" value="EAL67347.1"/>
    <property type="molecule type" value="Genomic_DNA"/>
</dbReference>
<dbReference type="RefSeq" id="XP_641325.1">
    <property type="nucleotide sequence ID" value="XM_636233.1"/>
</dbReference>
<dbReference type="SMR" id="Q54VN0"/>
<dbReference type="FunCoup" id="Q54VN0">
    <property type="interactions" value="877"/>
</dbReference>
<dbReference type="PaxDb" id="44689-DDB0206463"/>
<dbReference type="EnsemblProtists" id="EAL67347">
    <property type="protein sequence ID" value="EAL67347"/>
    <property type="gene ID" value="DDB_G0280241"/>
</dbReference>
<dbReference type="GeneID" id="8622459"/>
<dbReference type="KEGG" id="ddi:DDB_G0280241"/>
<dbReference type="dictyBase" id="DDB_G0280241"/>
<dbReference type="VEuPathDB" id="AmoebaDB:DDB_G0280241"/>
<dbReference type="HOGENOM" id="CLU_1312173_0_0_1"/>
<dbReference type="InParanoid" id="Q54VN0"/>
<dbReference type="PRO" id="PR:Q54VN0"/>
<dbReference type="Proteomes" id="UP000002195">
    <property type="component" value="Chromosome 3"/>
</dbReference>
<protein>
    <recommendedName>
        <fullName>Putative uncharacterized protein DDB_G0280241</fullName>
    </recommendedName>
</protein>
<proteinExistence type="predicted"/>
<gene>
    <name type="ORF">DDB_G0280241</name>
</gene>
<accession>Q54VN0</accession>
<reference key="1">
    <citation type="journal article" date="2005" name="Nature">
        <title>The genome of the social amoeba Dictyostelium discoideum.</title>
        <authorList>
            <person name="Eichinger L."/>
            <person name="Pachebat J.A."/>
            <person name="Gloeckner G."/>
            <person name="Rajandream M.A."/>
            <person name="Sucgang R."/>
            <person name="Berriman M."/>
            <person name="Song J."/>
            <person name="Olsen R."/>
            <person name="Szafranski K."/>
            <person name="Xu Q."/>
            <person name="Tunggal B."/>
            <person name="Kummerfeld S."/>
            <person name="Madera M."/>
            <person name="Konfortov B.A."/>
            <person name="Rivero F."/>
            <person name="Bankier A.T."/>
            <person name="Lehmann R."/>
            <person name="Hamlin N."/>
            <person name="Davies R."/>
            <person name="Gaudet P."/>
            <person name="Fey P."/>
            <person name="Pilcher K."/>
            <person name="Chen G."/>
            <person name="Saunders D."/>
            <person name="Sodergren E.J."/>
            <person name="Davis P."/>
            <person name="Kerhornou A."/>
            <person name="Nie X."/>
            <person name="Hall N."/>
            <person name="Anjard C."/>
            <person name="Hemphill L."/>
            <person name="Bason N."/>
            <person name="Farbrother P."/>
            <person name="Desany B."/>
            <person name="Just E."/>
            <person name="Morio T."/>
            <person name="Rost R."/>
            <person name="Churcher C.M."/>
            <person name="Cooper J."/>
            <person name="Haydock S."/>
            <person name="van Driessche N."/>
            <person name="Cronin A."/>
            <person name="Goodhead I."/>
            <person name="Muzny D.M."/>
            <person name="Mourier T."/>
            <person name="Pain A."/>
            <person name="Lu M."/>
            <person name="Harper D."/>
            <person name="Lindsay R."/>
            <person name="Hauser H."/>
            <person name="James K.D."/>
            <person name="Quiles M."/>
            <person name="Madan Babu M."/>
            <person name="Saito T."/>
            <person name="Buchrieser C."/>
            <person name="Wardroper A."/>
            <person name="Felder M."/>
            <person name="Thangavelu M."/>
            <person name="Johnson D."/>
            <person name="Knights A."/>
            <person name="Loulseged H."/>
            <person name="Mungall K.L."/>
            <person name="Oliver K."/>
            <person name="Price C."/>
            <person name="Quail M.A."/>
            <person name="Urushihara H."/>
            <person name="Hernandez J."/>
            <person name="Rabbinowitsch E."/>
            <person name="Steffen D."/>
            <person name="Sanders M."/>
            <person name="Ma J."/>
            <person name="Kohara Y."/>
            <person name="Sharp S."/>
            <person name="Simmonds M.N."/>
            <person name="Spiegler S."/>
            <person name="Tivey A."/>
            <person name="Sugano S."/>
            <person name="White B."/>
            <person name="Walker D."/>
            <person name="Woodward J.R."/>
            <person name="Winckler T."/>
            <person name="Tanaka Y."/>
            <person name="Shaulsky G."/>
            <person name="Schleicher M."/>
            <person name="Weinstock G.M."/>
            <person name="Rosenthal A."/>
            <person name="Cox E.C."/>
            <person name="Chisholm R.L."/>
            <person name="Gibbs R.A."/>
            <person name="Loomis W.F."/>
            <person name="Platzer M."/>
            <person name="Kay R.R."/>
            <person name="Williams J.G."/>
            <person name="Dear P.H."/>
            <person name="Noegel A.A."/>
            <person name="Barrell B.G."/>
            <person name="Kuspa A."/>
        </authorList>
    </citation>
    <scope>NUCLEOTIDE SEQUENCE [LARGE SCALE GENOMIC DNA]</scope>
    <source>
        <strain>AX4</strain>
    </source>
</reference>